<dbReference type="EMBL" id="AB188302">
    <property type="protein sequence ID" value="BAD89864.1"/>
    <property type="molecule type" value="mRNA"/>
</dbReference>
<dbReference type="RefSeq" id="NP_001012483.1">
    <property type="nucleotide sequence ID" value="NM_001012465.1"/>
</dbReference>
<dbReference type="SMR" id="Q5FB95"/>
<dbReference type="FunCoup" id="Q5FB95">
    <property type="interactions" value="142"/>
</dbReference>
<dbReference type="STRING" id="10116.ENSRNOP00000026192"/>
<dbReference type="PhosphoSitePlus" id="Q5FB95"/>
<dbReference type="PaxDb" id="10116-ENSRNOP00000026192"/>
<dbReference type="GeneID" id="300743"/>
<dbReference type="KEGG" id="rno:300743"/>
<dbReference type="UCSC" id="RGD:1310538">
    <property type="organism name" value="rat"/>
</dbReference>
<dbReference type="AGR" id="RGD:1310538"/>
<dbReference type="CTD" id="79748"/>
<dbReference type="RGD" id="1310538">
    <property type="gene designation" value="Lman1l"/>
</dbReference>
<dbReference type="eggNOG" id="KOG3838">
    <property type="taxonomic scope" value="Eukaryota"/>
</dbReference>
<dbReference type="InParanoid" id="Q5FB95"/>
<dbReference type="PhylomeDB" id="Q5FB95"/>
<dbReference type="Reactome" id="R-RNO-204005">
    <property type="pathway name" value="COPII-mediated vesicle transport"/>
</dbReference>
<dbReference type="Reactome" id="R-RNO-5694530">
    <property type="pathway name" value="Cargo concentration in the ER"/>
</dbReference>
<dbReference type="PRO" id="PR:Q5FB95"/>
<dbReference type="Proteomes" id="UP000002494">
    <property type="component" value="Unplaced"/>
</dbReference>
<dbReference type="GO" id="GO:0030134">
    <property type="term" value="C:COPII-coated ER to Golgi transport vesicle"/>
    <property type="evidence" value="ECO:0000318"/>
    <property type="project" value="GO_Central"/>
</dbReference>
<dbReference type="GO" id="GO:0005789">
    <property type="term" value="C:endoplasmic reticulum membrane"/>
    <property type="evidence" value="ECO:0000318"/>
    <property type="project" value="GO_Central"/>
</dbReference>
<dbReference type="GO" id="GO:0005793">
    <property type="term" value="C:endoplasmic reticulum-Golgi intermediate compartment"/>
    <property type="evidence" value="ECO:0000318"/>
    <property type="project" value="GO_Central"/>
</dbReference>
<dbReference type="GO" id="GO:0033116">
    <property type="term" value="C:endoplasmic reticulum-Golgi intermediate compartment membrane"/>
    <property type="evidence" value="ECO:0007669"/>
    <property type="project" value="UniProtKB-SubCell"/>
</dbReference>
<dbReference type="GO" id="GO:0000139">
    <property type="term" value="C:Golgi membrane"/>
    <property type="evidence" value="ECO:0000318"/>
    <property type="project" value="GO_Central"/>
</dbReference>
<dbReference type="GO" id="GO:0005537">
    <property type="term" value="F:D-mannose binding"/>
    <property type="evidence" value="ECO:0000318"/>
    <property type="project" value="GO_Central"/>
</dbReference>
<dbReference type="GO" id="GO:0006888">
    <property type="term" value="P:endoplasmic reticulum to Golgi vesicle-mediated transport"/>
    <property type="evidence" value="ECO:0000318"/>
    <property type="project" value="GO_Central"/>
</dbReference>
<dbReference type="CDD" id="cd06902">
    <property type="entry name" value="lectin_ERGIC-53_ERGL"/>
    <property type="match status" value="1"/>
</dbReference>
<dbReference type="FunFam" id="2.60.120.200:FF:000028">
    <property type="entry name" value="Blast:Protein ERGIC-53"/>
    <property type="match status" value="1"/>
</dbReference>
<dbReference type="Gene3D" id="2.60.120.200">
    <property type="match status" value="1"/>
</dbReference>
<dbReference type="InterPro" id="IPR013320">
    <property type="entry name" value="ConA-like_dom_sf"/>
</dbReference>
<dbReference type="InterPro" id="IPR051136">
    <property type="entry name" value="Intracellular_Lectin-GPT"/>
</dbReference>
<dbReference type="InterPro" id="IPR005052">
    <property type="entry name" value="Lectin_leg"/>
</dbReference>
<dbReference type="PANTHER" id="PTHR12223:SF31">
    <property type="entry name" value="PROTEIN ERGIC-53-LIKE"/>
    <property type="match status" value="1"/>
</dbReference>
<dbReference type="PANTHER" id="PTHR12223">
    <property type="entry name" value="VESICULAR MANNOSE-BINDING LECTIN"/>
    <property type="match status" value="1"/>
</dbReference>
<dbReference type="Pfam" id="PF03388">
    <property type="entry name" value="Lectin_leg-like"/>
    <property type="match status" value="1"/>
</dbReference>
<dbReference type="SUPFAM" id="SSF49899">
    <property type="entry name" value="Concanavalin A-like lectins/glucanases"/>
    <property type="match status" value="1"/>
</dbReference>
<dbReference type="PROSITE" id="PS51328">
    <property type="entry name" value="L_LECTIN_LIKE"/>
    <property type="match status" value="1"/>
</dbReference>
<comment type="subcellular location">
    <subcellularLocation>
        <location evidence="3">Endoplasmic reticulum-Golgi intermediate compartment membrane</location>
        <topology evidence="3">Single-pass type I membrane protein</topology>
    </subcellularLocation>
</comment>
<comment type="tissue specificity">
    <text evidence="3">Predominantly expressed in the sublingual salivary gland, in the mucous cells of the acini, but not in the serous cells, nor in the duct system (at protein level). Not detected in the submandilar, nor the parotid glands. Expressed in the mucous glands, but not detected in the serous glands (at protein level). Besides the salivary glands, expressed in the Brunner's glands in the duodenum, but no other mucous or serous glands (at protein level).</text>
</comment>
<proteinExistence type="evidence at protein level"/>
<keyword id="KW-1015">Disulfide bond</keyword>
<keyword id="KW-0430">Lectin</keyword>
<keyword id="KW-0472">Membrane</keyword>
<keyword id="KW-1185">Reference proteome</keyword>
<keyword id="KW-0732">Signal</keyword>
<keyword id="KW-0812">Transmembrane</keyword>
<keyword id="KW-1133">Transmembrane helix</keyword>
<organism>
    <name type="scientific">Rattus norvegicus</name>
    <name type="common">Rat</name>
    <dbReference type="NCBI Taxonomy" id="10116"/>
    <lineage>
        <taxon>Eukaryota</taxon>
        <taxon>Metazoa</taxon>
        <taxon>Chordata</taxon>
        <taxon>Craniata</taxon>
        <taxon>Vertebrata</taxon>
        <taxon>Euteleostomi</taxon>
        <taxon>Mammalia</taxon>
        <taxon>Eutheria</taxon>
        <taxon>Euarchontoglires</taxon>
        <taxon>Glires</taxon>
        <taxon>Rodentia</taxon>
        <taxon>Myomorpha</taxon>
        <taxon>Muroidea</taxon>
        <taxon>Muridae</taxon>
        <taxon>Murinae</taxon>
        <taxon>Rattus</taxon>
    </lineage>
</organism>
<reference key="1">
    <citation type="journal article" date="2005" name="J. Histochem. Cytochem.">
        <title>Cloning and characterization of a novel animal lectin expressed in the rat sublingual gland.</title>
        <authorList>
            <person name="Sakulsak N."/>
            <person name="Wakayama T."/>
            <person name="Hipkaeo W."/>
            <person name="Yamamoto M."/>
            <person name="Iseki S."/>
        </authorList>
    </citation>
    <scope>NUCLEOTIDE SEQUENCE [MRNA]</scope>
    <scope>SUBCELLULAR LOCATION</scope>
    <scope>TISSUE SPECIFICITY</scope>
</reference>
<name>LMA1L_RAT</name>
<sequence>MLKTGGLSPSLCLLSLLLALHSAERSYPPPQRRFEYKLSFKGPRLAVPGAGIPFWSHHGDAIPGLEEVRLVPSMKNRSGAVWSEISVSFPSWEVEMQMRVTGPGRRGALGVAMWYTKDRDQVGSVVEGLASWDGIGIYFDSSSNDVQNGPAIRVLASDGHDLQEQFGDGTVRELGSCLRDFRNRPHPFRARITYWRQRLRVSLSGGLTPNDPEEVCVDVEPLLLAPGGFFGVSAATSTLADDHDVLSFLTFSLRDPGSEEALQPFTEKEQFHLARKLEELKARLALGTREDTILPLNSKAQEEGERFFNLEDTLSRQSQILQALQALSRQMDQAEKQWKQQLGSVVQIRPEGGWNTAKVSTLLYGQRTLIQALQEMREAAAQMASGAQVFYLPVGTKHHFFELDQTLGLLQKDLRDLVKMTAKPPRPSGWLPGFSTCLRTSIFLFFLLIQTVGFFCYMNFRQELDKRLQEYLFTESISLQPALPIPRTIGVLRRQPVSPSMQA</sequence>
<feature type="signal peptide" evidence="1">
    <location>
        <begin position="1"/>
        <end position="25"/>
    </location>
</feature>
<feature type="chain" id="PRO_0000398824" description="Protein ERGIC-53-like">
    <location>
        <begin position="26"/>
        <end position="503"/>
    </location>
</feature>
<feature type="topological domain" description="Lumenal" evidence="1">
    <location>
        <begin position="26"/>
        <end position="439"/>
    </location>
</feature>
<feature type="transmembrane region" description="Helical" evidence="1">
    <location>
        <begin position="440"/>
        <end position="460"/>
    </location>
</feature>
<feature type="topological domain" description="Cytoplasmic" evidence="1">
    <location>
        <begin position="461"/>
        <end position="503"/>
    </location>
</feature>
<feature type="domain" description="L-type lectin-like" evidence="2">
    <location>
        <begin position="32"/>
        <end position="253"/>
    </location>
</feature>
<feature type="disulfide bond" evidence="2">
    <location>
        <begin position="177"/>
        <end position="216"/>
    </location>
</feature>
<evidence type="ECO:0000255" key="1"/>
<evidence type="ECO:0000255" key="2">
    <source>
        <dbReference type="PROSITE-ProRule" id="PRU00658"/>
    </source>
</evidence>
<evidence type="ECO:0000269" key="3">
    <source>
    </source>
</evidence>
<accession>Q5FB95</accession>
<gene>
    <name type="primary">Lman1l</name>
    <name type="synonym">Ergl</name>
</gene>
<protein>
    <recommendedName>
        <fullName>Protein ERGIC-53-like</fullName>
    </recommendedName>
    <alternativeName>
        <fullName>ERGIC53-like protein</fullName>
    </alternativeName>
    <alternativeName>
        <fullName>Lectin mannose-binding 1-like</fullName>
        <shortName>LMAN1-like protein</shortName>
    </alternativeName>
    <alternativeName>
        <fullName>Sublingual acinar membrane protein</fullName>
        <shortName>Slamp</shortName>
    </alternativeName>
</protein>